<keyword id="KW-0002">3D-structure</keyword>
<keyword id="KW-0903">Direct protein sequencing</keyword>
<keyword id="KW-0378">Hydrolase</keyword>
<dbReference type="EC" id="3.5.5.8"/>
<dbReference type="EMBL" id="AB007989">
    <property type="protein sequence ID" value="BAA28286.1"/>
    <property type="molecule type" value="Genomic_DNA"/>
</dbReference>
<dbReference type="PDB" id="2DD4">
    <property type="method" value="X-ray"/>
    <property type="resolution" value="2.06 A"/>
    <property type="chains" value="B/E/H/K=1-157"/>
</dbReference>
<dbReference type="PDB" id="2DD5">
    <property type="method" value="X-ray"/>
    <property type="resolution" value="2.00 A"/>
    <property type="chains" value="B/E/H/K=1-157"/>
</dbReference>
<dbReference type="PDB" id="2DXB">
    <property type="method" value="X-ray"/>
    <property type="resolution" value="2.25 A"/>
    <property type="chains" value="B/E/H/K/N/Q/T/W=1-157"/>
</dbReference>
<dbReference type="PDB" id="2DXC">
    <property type="method" value="X-ray"/>
    <property type="resolution" value="1.90 A"/>
    <property type="chains" value="B/E/H/K=1-157"/>
</dbReference>
<dbReference type="PDB" id="2ZZD">
    <property type="method" value="X-ray"/>
    <property type="resolution" value="1.78 A"/>
    <property type="chains" value="B/E/H/K=1-157"/>
</dbReference>
<dbReference type="PDB" id="3VYG">
    <property type="method" value="X-ray"/>
    <property type="resolution" value="1.72 A"/>
    <property type="chains" value="B/E/H/K=1-157"/>
</dbReference>
<dbReference type="PDBsum" id="2DD4"/>
<dbReference type="PDBsum" id="2DD5"/>
<dbReference type="PDBsum" id="2DXB"/>
<dbReference type="PDBsum" id="2DXC"/>
<dbReference type="PDBsum" id="2ZZD"/>
<dbReference type="PDBsum" id="3VYG"/>
<dbReference type="SMR" id="O66186"/>
<dbReference type="KEGG" id="ag:BAA28286"/>
<dbReference type="BioCyc" id="MetaCyc:MONOMER-2146"/>
<dbReference type="BRENDA" id="3.5.5.8">
    <property type="organism ID" value="6354"/>
</dbReference>
<dbReference type="UniPathway" id="UPA00366"/>
<dbReference type="EvolutionaryTrace" id="O66186"/>
<dbReference type="GO" id="GO:0018760">
    <property type="term" value="F:thiocyanate hydrolase activity"/>
    <property type="evidence" value="ECO:0007669"/>
    <property type="project" value="UniProtKB-EC"/>
</dbReference>
<dbReference type="GO" id="GO:0046265">
    <property type="term" value="P:thiocyanate catabolic process"/>
    <property type="evidence" value="ECO:0007669"/>
    <property type="project" value="UniProtKB-UniPathway"/>
</dbReference>
<dbReference type="Gene3D" id="1.10.472.20">
    <property type="entry name" value="Nitrile hydratase, beta subunit"/>
    <property type="match status" value="1"/>
</dbReference>
<dbReference type="InterPro" id="IPR049054">
    <property type="entry name" value="CN_hydtase_beta-like_N"/>
</dbReference>
<dbReference type="InterPro" id="IPR042262">
    <property type="entry name" value="CN_hydtase_beta_C"/>
</dbReference>
<dbReference type="InterPro" id="IPR008990">
    <property type="entry name" value="Elect_transpt_acc-like_dom_sf"/>
</dbReference>
<dbReference type="Pfam" id="PF21006">
    <property type="entry name" value="NHase_beta_N"/>
    <property type="match status" value="1"/>
</dbReference>
<dbReference type="SUPFAM" id="SSF50090">
    <property type="entry name" value="Electron transport accessory proteins"/>
    <property type="match status" value="1"/>
</dbReference>
<accession>O66186</accession>
<gene>
    <name type="primary">scnB</name>
</gene>
<protein>
    <recommendedName>
        <fullName>Thiocyanate hydrolase subunit beta</fullName>
        <ecNumber>3.5.5.8</ecNumber>
    </recommendedName>
</protein>
<organism>
    <name type="scientific">Thiobacillus thioparus</name>
    <dbReference type="NCBI Taxonomy" id="931"/>
    <lineage>
        <taxon>Bacteria</taxon>
        <taxon>Pseudomonadati</taxon>
        <taxon>Pseudomonadota</taxon>
        <taxon>Betaproteobacteria</taxon>
        <taxon>Nitrosomonadales</taxon>
        <taxon>Thiobacillaceae</taxon>
        <taxon>Thiobacillus</taxon>
    </lineage>
</organism>
<evidence type="ECO:0000269" key="1">
    <source>
    </source>
</evidence>
<evidence type="ECO:0000269" key="2">
    <source>
    </source>
</evidence>
<evidence type="ECO:0007829" key="3">
    <source>
        <dbReference type="PDB" id="3VYG"/>
    </source>
</evidence>
<comment type="function">
    <text>Involved in the degradation of thiocyanate.</text>
</comment>
<comment type="catalytic activity">
    <reaction>
        <text>thiocyanate + H2O + 2 H(+) = carbonyl sulfide + NH4(+)</text>
        <dbReference type="Rhea" id="RHEA:21464"/>
        <dbReference type="ChEBI" id="CHEBI:15377"/>
        <dbReference type="ChEBI" id="CHEBI:15378"/>
        <dbReference type="ChEBI" id="CHEBI:16573"/>
        <dbReference type="ChEBI" id="CHEBI:18022"/>
        <dbReference type="ChEBI" id="CHEBI:28938"/>
        <dbReference type="EC" id="3.5.5.8"/>
    </reaction>
</comment>
<comment type="pathway">
    <text>Organosulfur degradation; thiocyanate degradation.</text>
</comment>
<comment type="subunit">
    <text evidence="1">Heterododecamer consisting of 4 alpha, 4 beta, and 4 gamma subunits.</text>
</comment>
<feature type="initiator methionine" description="Removed" evidence="2">
    <location>
        <position position="1"/>
    </location>
</feature>
<feature type="chain" id="PRO_0000097631" description="Thiocyanate hydrolase subunit beta">
    <location>
        <begin position="2"/>
        <end position="157"/>
    </location>
</feature>
<feature type="helix" evidence="3">
    <location>
        <begin position="4"/>
        <end position="16"/>
    </location>
</feature>
<feature type="helix" evidence="3">
    <location>
        <begin position="17"/>
        <end position="19"/>
    </location>
</feature>
<feature type="strand" evidence="3">
    <location>
        <begin position="22"/>
        <end position="26"/>
    </location>
</feature>
<feature type="helix" evidence="3">
    <location>
        <begin position="32"/>
        <end position="34"/>
    </location>
</feature>
<feature type="helix" evidence="3">
    <location>
        <begin position="37"/>
        <end position="43"/>
    </location>
</feature>
<feature type="helix" evidence="3">
    <location>
        <begin position="67"/>
        <end position="81"/>
    </location>
</feature>
<feature type="helix" evidence="3">
    <location>
        <begin position="87"/>
        <end position="95"/>
    </location>
</feature>
<feature type="turn" evidence="3">
    <location>
        <begin position="96"/>
        <end position="98"/>
    </location>
</feature>
<feature type="helix" evidence="3">
    <location>
        <begin position="100"/>
        <end position="105"/>
    </location>
</feature>
<feature type="helix" evidence="3">
    <location>
        <begin position="108"/>
        <end position="122"/>
    </location>
</feature>
<feature type="helix" evidence="3">
    <location>
        <begin position="128"/>
        <end position="143"/>
    </location>
</feature>
<feature type="helix" evidence="3">
    <location>
        <begin position="149"/>
        <end position="151"/>
    </location>
</feature>
<name>SCNB_THITI</name>
<proteinExistence type="evidence at protein level"/>
<reference key="1">
    <citation type="journal article" date="1998" name="J. Bacteriol.">
        <title>Cloning of genes coding for the three subunits of thiocyanate hydrolase of Thiobacillus thioparus THI 115 and their evolutionary relationships to nitrile hydratase.</title>
        <authorList>
            <person name="Katayama Y."/>
            <person name="Matsushita Y."/>
            <person name="Kaneko M."/>
            <person name="Kondo M."/>
            <person name="Mizuno T."/>
            <person name="Nyunoya H."/>
        </authorList>
    </citation>
    <scope>NUCLEOTIDE SEQUENCE [GENOMIC DNA]</scope>
    <scope>PROTEIN SEQUENCE OF 2-21</scope>
    <source>
        <strain>THI 115</strain>
    </source>
</reference>
<reference key="2">
    <citation type="journal article" date="1992" name="J. Biol. Chem.">
        <title>A thiocyanate hydrolase of Thiobacillus thioparus. A novel enzyme catalyzing the formation of carbonyl sulfide from thiocyanate.</title>
        <authorList>
            <person name="Katayama Y."/>
            <person name="Narahara Y."/>
            <person name="Inoue Y."/>
            <person name="Amano F."/>
            <person name="Kanagawa T."/>
            <person name="Kuraishi H."/>
        </authorList>
    </citation>
    <scope>CHARACTERIZATION</scope>
    <source>
        <strain>THI 115</strain>
    </source>
</reference>
<reference key="3">
    <citation type="journal article" date="2007" name="J. Mol. Biol.">
        <title>Structure of thiocyanate hydrolase: a new nitrile hydratase family protein with a novel five-coordinate cobalt(III) center.</title>
        <authorList>
            <person name="Arakawa T."/>
            <person name="Kawano Y."/>
            <person name="Kataoka S."/>
            <person name="Katayama Y."/>
            <person name="Kamiya N."/>
            <person name="Yohda M."/>
            <person name="Odaka M."/>
        </authorList>
    </citation>
    <scope>X-RAY CRYSTALLOGRAPHY (1.9 ANGSTROMS) IN COMPLEX WITH SCNA AND SCNC</scope>
    <scope>SUBUNIT</scope>
</reference>
<sequence>MSSSIREEVHRHLGTVALMQPALHQQTHAPAPTEITHTLFRAYTRVPHDVGGEADVPIEYHEKEEEIWELNTFATCECLAWRGVWTAEERRRKQNCDVGQTVYLGMPYYGRWLLTAARILVDKQFVTLTELHNKIVEMRERVASGQGLGEYLPPKAK</sequence>